<accession>A9LYE2</accession>
<evidence type="ECO:0000250" key="1"/>
<evidence type="ECO:0000255" key="2">
    <source>
        <dbReference type="HAMAP-Rule" id="MF_01320"/>
    </source>
</evidence>
<evidence type="ECO:0000256" key="3">
    <source>
        <dbReference type="SAM" id="MobiDB-lite"/>
    </source>
</evidence>
<evidence type="ECO:0000305" key="4"/>
<feature type="chain" id="PRO_0000342534" description="Large ribosomal subunit protein uL2cz/uL2cy">
    <location>
        <begin position="1"/>
        <end position="273"/>
    </location>
</feature>
<feature type="region of interest" description="Disordered" evidence="3">
    <location>
        <begin position="1"/>
        <end position="23"/>
    </location>
</feature>
<feature type="region of interest" description="Disordered" evidence="3">
    <location>
        <begin position="224"/>
        <end position="273"/>
    </location>
</feature>
<feature type="compositionally biased region" description="Basic and acidic residues" evidence="3">
    <location>
        <begin position="262"/>
        <end position="273"/>
    </location>
</feature>
<gene>
    <name type="primary">rpl2-A</name>
</gene>
<gene>
    <name type="primary">rpl2-B</name>
</gene>
<comment type="subunit">
    <text evidence="1">Part of the 50S ribosomal subunit.</text>
</comment>
<comment type="subcellular location">
    <subcellularLocation>
        <location>Plastid</location>
        <location>Chloroplast</location>
    </subcellularLocation>
</comment>
<comment type="similarity">
    <text evidence="4">Belongs to the universal ribosomal protein uL2 family.</text>
</comment>
<sequence>MAIHLYKTSTSSTRNGAVDSQVKSNPRNNLIYGQHHCGKGRNARGIITAGHRGGGHKRLYRKIDFRRNKKDISGRIVTIEYDPNRNAYICLIHYGDGEKRYILHPRGAIIGDTIVSGTEVPISMGNALPLTDMPLGTAIHNIEITLGKGGQLARAAGAVAKLIAKEGKSATLRLPSGEVRLISKNCSATVGQVGNVGANQQSLGRAGSKCWLGKRPVVRGVVMNPVDHPHGGGEGRAPIGRKKPTTPWGYPALGRRSRKRNKYSDRFILRRRK</sequence>
<proteinExistence type="inferred from homology"/>
<geneLocation type="chloroplast"/>
<keyword id="KW-0150">Chloroplast</keyword>
<keyword id="KW-0934">Plastid</keyword>
<keyword id="KW-0687">Ribonucleoprotein</keyword>
<keyword id="KW-0689">Ribosomal protein</keyword>
<organism>
    <name type="scientific">Acorus calamus var. americanus</name>
    <name type="common">American sweet flag</name>
    <name type="synonym">Acorus americanus</name>
    <dbReference type="NCBI Taxonomy" id="263995"/>
    <lineage>
        <taxon>Eukaryota</taxon>
        <taxon>Viridiplantae</taxon>
        <taxon>Streptophyta</taxon>
        <taxon>Embryophyta</taxon>
        <taxon>Tracheophyta</taxon>
        <taxon>Spermatophyta</taxon>
        <taxon>Magnoliopsida</taxon>
        <taxon>Liliopsida</taxon>
        <taxon>Acoraceae</taxon>
        <taxon>Acorus</taxon>
    </lineage>
</organism>
<dbReference type="EMBL" id="EU273602">
    <property type="protein sequence ID" value="ABX38785.1"/>
    <property type="molecule type" value="Genomic_DNA"/>
</dbReference>
<dbReference type="EMBL" id="EU273602">
    <property type="protein sequence ID" value="ABX38806.1"/>
    <property type="molecule type" value="Genomic_DNA"/>
</dbReference>
<dbReference type="SMR" id="A9LYE2"/>
<dbReference type="GO" id="GO:0009507">
    <property type="term" value="C:chloroplast"/>
    <property type="evidence" value="ECO:0007669"/>
    <property type="project" value="UniProtKB-SubCell"/>
</dbReference>
<dbReference type="GO" id="GO:0005762">
    <property type="term" value="C:mitochondrial large ribosomal subunit"/>
    <property type="evidence" value="ECO:0007669"/>
    <property type="project" value="TreeGrafter"/>
</dbReference>
<dbReference type="GO" id="GO:0019843">
    <property type="term" value="F:rRNA binding"/>
    <property type="evidence" value="ECO:0007669"/>
    <property type="project" value="UniProtKB-UniRule"/>
</dbReference>
<dbReference type="GO" id="GO:0003735">
    <property type="term" value="F:structural constituent of ribosome"/>
    <property type="evidence" value="ECO:0007669"/>
    <property type="project" value="InterPro"/>
</dbReference>
<dbReference type="GO" id="GO:0016740">
    <property type="term" value="F:transferase activity"/>
    <property type="evidence" value="ECO:0007669"/>
    <property type="project" value="InterPro"/>
</dbReference>
<dbReference type="GO" id="GO:0032543">
    <property type="term" value="P:mitochondrial translation"/>
    <property type="evidence" value="ECO:0007669"/>
    <property type="project" value="TreeGrafter"/>
</dbReference>
<dbReference type="FunFam" id="4.10.950.10:FF:000001">
    <property type="entry name" value="50S ribosomal protein L2"/>
    <property type="match status" value="1"/>
</dbReference>
<dbReference type="FunFam" id="2.30.30.30:FF:000008">
    <property type="entry name" value="50S ribosomal protein L2, chloroplastic"/>
    <property type="match status" value="1"/>
</dbReference>
<dbReference type="FunFam" id="2.40.50.140:FF:000029">
    <property type="entry name" value="50S ribosomal protein L2, chloroplastic"/>
    <property type="match status" value="1"/>
</dbReference>
<dbReference type="Gene3D" id="2.30.30.30">
    <property type="match status" value="1"/>
</dbReference>
<dbReference type="Gene3D" id="2.40.50.140">
    <property type="entry name" value="Nucleic acid-binding proteins"/>
    <property type="match status" value="1"/>
</dbReference>
<dbReference type="Gene3D" id="4.10.950.10">
    <property type="entry name" value="Ribosomal protein L2, domain 3"/>
    <property type="match status" value="1"/>
</dbReference>
<dbReference type="HAMAP" id="MF_01320_B">
    <property type="entry name" value="Ribosomal_uL2_B"/>
    <property type="match status" value="1"/>
</dbReference>
<dbReference type="InterPro" id="IPR012340">
    <property type="entry name" value="NA-bd_OB-fold"/>
</dbReference>
<dbReference type="InterPro" id="IPR014722">
    <property type="entry name" value="Rib_uL2_dom2"/>
</dbReference>
<dbReference type="InterPro" id="IPR002171">
    <property type="entry name" value="Ribosomal_uL2"/>
</dbReference>
<dbReference type="InterPro" id="IPR005880">
    <property type="entry name" value="Ribosomal_uL2_bac/org-type"/>
</dbReference>
<dbReference type="InterPro" id="IPR022669">
    <property type="entry name" value="Ribosomal_uL2_C"/>
</dbReference>
<dbReference type="InterPro" id="IPR022671">
    <property type="entry name" value="Ribosomal_uL2_CS"/>
</dbReference>
<dbReference type="InterPro" id="IPR014726">
    <property type="entry name" value="Ribosomal_uL2_dom3"/>
</dbReference>
<dbReference type="InterPro" id="IPR022666">
    <property type="entry name" value="Ribosomal_uL2_RNA-bd_dom"/>
</dbReference>
<dbReference type="InterPro" id="IPR008991">
    <property type="entry name" value="Translation_prot_SH3-like_sf"/>
</dbReference>
<dbReference type="NCBIfam" id="TIGR01171">
    <property type="entry name" value="rplB_bact"/>
    <property type="match status" value="1"/>
</dbReference>
<dbReference type="PANTHER" id="PTHR13691:SF5">
    <property type="entry name" value="LARGE RIBOSOMAL SUBUNIT PROTEIN UL2M"/>
    <property type="match status" value="1"/>
</dbReference>
<dbReference type="PANTHER" id="PTHR13691">
    <property type="entry name" value="RIBOSOMAL PROTEIN L2"/>
    <property type="match status" value="1"/>
</dbReference>
<dbReference type="Pfam" id="PF00181">
    <property type="entry name" value="Ribosomal_L2"/>
    <property type="match status" value="1"/>
</dbReference>
<dbReference type="Pfam" id="PF03947">
    <property type="entry name" value="Ribosomal_L2_C"/>
    <property type="match status" value="1"/>
</dbReference>
<dbReference type="PIRSF" id="PIRSF002158">
    <property type="entry name" value="Ribosomal_L2"/>
    <property type="match status" value="1"/>
</dbReference>
<dbReference type="SMART" id="SM01383">
    <property type="entry name" value="Ribosomal_L2"/>
    <property type="match status" value="1"/>
</dbReference>
<dbReference type="SMART" id="SM01382">
    <property type="entry name" value="Ribosomal_L2_C"/>
    <property type="match status" value="1"/>
</dbReference>
<dbReference type="SUPFAM" id="SSF50249">
    <property type="entry name" value="Nucleic acid-binding proteins"/>
    <property type="match status" value="1"/>
</dbReference>
<dbReference type="SUPFAM" id="SSF50104">
    <property type="entry name" value="Translation proteins SH3-like domain"/>
    <property type="match status" value="1"/>
</dbReference>
<dbReference type="PROSITE" id="PS00467">
    <property type="entry name" value="RIBOSOMAL_L2"/>
    <property type="match status" value="1"/>
</dbReference>
<reference key="1">
    <citation type="submission" date="2007-11" db="EMBL/GenBank/DDBJ databases">
        <title>The complete chloroplast genome of Acorus americanus.</title>
        <authorList>
            <person name="Peery R.M."/>
            <person name="Chumley T.W."/>
            <person name="Kuehl J.V."/>
            <person name="Boore J.L."/>
            <person name="Raubeson L.A."/>
        </authorList>
    </citation>
    <scope>NUCLEOTIDE SEQUENCE [LARGE SCALE GENOMIC DNA]</scope>
</reference>
<name>RK2_ACOCI</name>
<protein>
    <recommendedName>
        <fullName evidence="2">Large ribosomal subunit protein uL2cz/uL2cy</fullName>
    </recommendedName>
    <alternativeName>
        <fullName evidence="4">50S ribosomal protein L2, chloroplastic</fullName>
    </alternativeName>
</protein>